<protein>
    <recommendedName>
        <fullName evidence="5">CAPA peptides</fullName>
    </recommendedName>
    <component>
        <recommendedName>
            <fullName evidence="5">Periviscerokinin 1</fullName>
        </recommendedName>
    </component>
    <component>
        <recommendedName>
            <fullName evidence="5">Periviscerokinin 2</fullName>
        </recommendedName>
    </component>
</protein>
<dbReference type="EMBL" id="GL443910">
    <property type="protein sequence ID" value="EFN61511.1"/>
    <property type="molecule type" value="Genomic_DNA"/>
</dbReference>
<dbReference type="EnsemblMetazoa" id="XM_011267954.2">
    <property type="protein sequence ID" value="XP_011266256.1"/>
    <property type="gene ID" value="LOC105257373"/>
</dbReference>
<dbReference type="KEGG" id="cfo:105257373"/>
<dbReference type="OrthoDB" id="6430009at2759"/>
<dbReference type="Proteomes" id="UP000000311">
    <property type="component" value="Unassembled WGS sequence"/>
</dbReference>
<dbReference type="GO" id="GO:0005576">
    <property type="term" value="C:extracellular region"/>
    <property type="evidence" value="ECO:0007669"/>
    <property type="project" value="UniProtKB-SubCell"/>
</dbReference>
<dbReference type="GO" id="GO:0007218">
    <property type="term" value="P:neuropeptide signaling pathway"/>
    <property type="evidence" value="ECO:0007669"/>
    <property type="project" value="UniProtKB-KW"/>
</dbReference>
<keyword id="KW-0027">Amidation</keyword>
<keyword id="KW-0903">Direct protein sequencing</keyword>
<keyword id="KW-0527">Neuropeptide</keyword>
<keyword id="KW-1185">Reference proteome</keyword>
<keyword id="KW-0964">Secreted</keyword>
<keyword id="KW-0732">Signal</keyword>
<organism>
    <name type="scientific">Camponotus floridanus</name>
    <name type="common">Florida carpenter ant</name>
    <dbReference type="NCBI Taxonomy" id="104421"/>
    <lineage>
        <taxon>Eukaryota</taxon>
        <taxon>Metazoa</taxon>
        <taxon>Ecdysozoa</taxon>
        <taxon>Arthropoda</taxon>
        <taxon>Hexapoda</taxon>
        <taxon>Insecta</taxon>
        <taxon>Pterygota</taxon>
        <taxon>Neoptera</taxon>
        <taxon>Endopterygota</taxon>
        <taxon>Hymenoptera</taxon>
        <taxon>Apocrita</taxon>
        <taxon>Aculeata</taxon>
        <taxon>Formicoidea</taxon>
        <taxon>Formicidae</taxon>
        <taxon>Formicinae</taxon>
        <taxon>Camponotus</taxon>
    </lineage>
</organism>
<gene>
    <name evidence="8" type="ORF">EAG_11747</name>
</gene>
<reference key="1">
    <citation type="journal article" date="2010" name="Science">
        <title>Genomic comparison of the ants Camponotus floridanus and Harpegnathos saltator.</title>
        <authorList>
            <person name="Bonasio R."/>
            <person name="Zhang G."/>
            <person name="Ye C."/>
            <person name="Mutti N.S."/>
            <person name="Fang X."/>
            <person name="Qin N."/>
            <person name="Donahue G."/>
            <person name="Yang P."/>
            <person name="Li Q."/>
            <person name="Li C."/>
            <person name="Zhang P."/>
            <person name="Huang Z."/>
            <person name="Berger S.L."/>
            <person name="Reinberg D."/>
            <person name="Wang J."/>
            <person name="Liebig J."/>
        </authorList>
    </citation>
    <scope>NUCLEOTIDE SEQUENCE [LARGE SCALE GENOMIC DNA]</scope>
</reference>
<reference evidence="6" key="2">
    <citation type="journal article" date="2015" name="J. Proteome Res.">
        <title>Neuropeptidomics of the carpenter ant Camponotus floridanus.</title>
        <authorList>
            <person name="Schmitt F."/>
            <person name="Vanselow J.T."/>
            <person name="Schlosser A."/>
            <person name="Kahnt J."/>
            <person name="Roessler W."/>
            <person name="Wegener C."/>
        </authorList>
    </citation>
    <scope>PROTEIN SEQUENCE OF 32-41 AND 56-65</scope>
    <scope>TISSUE SPECIFICITY</scope>
    <scope>MASS SPECTROMETRY</scope>
    <scope>IDENTIFICATION BY MASS SPECTROMETRY</scope>
    <scope>AMIDATION AT ILE-41 AND ILE-65</scope>
</reference>
<sequence length="181" mass="20956">MQDNRFFILMILLVFSTSLNQGQKLKANDRRSAGLVPYPRIGRNSEISSFSRSERALGLIHQPRIGRSDVSSFDNLNRFHDLSSDADIEFYAMDMDPLLSPDYEDYASKPIALKYADKLQKDNSWLMPDHIHGYKDFHFAQKINDPRLYYSILRDSRNTQGQGGYTPRLGRENERDTANFL</sequence>
<proteinExistence type="evidence at protein level"/>
<evidence type="ECO:0000250" key="1">
    <source>
        <dbReference type="UniProtKB" id="P83923"/>
    </source>
</evidence>
<evidence type="ECO:0000255" key="2"/>
<evidence type="ECO:0000256" key="3">
    <source>
        <dbReference type="SAM" id="MobiDB-lite"/>
    </source>
</evidence>
<evidence type="ECO:0000269" key="4">
    <source>
    </source>
</evidence>
<evidence type="ECO:0000303" key="5">
    <source>
    </source>
</evidence>
<evidence type="ECO:0000305" key="6"/>
<evidence type="ECO:0000305" key="7">
    <source>
    </source>
</evidence>
<evidence type="ECO:0000312" key="8">
    <source>
        <dbReference type="EMBL" id="EFN61511.1"/>
    </source>
</evidence>
<comment type="function">
    <text evidence="1">Periviscerokinins mediate visceral muscle contractile activity (myotropic activity).</text>
</comment>
<comment type="subcellular location">
    <subcellularLocation>
        <location evidence="7">Secreted</location>
    </subcellularLocation>
</comment>
<comment type="tissue specificity">
    <text evidence="4">Periviscerokinin 1 and 2 are expressed in central brain, antennal lobes and gnathal, thoracic and abominal ganglia. Periviscerokinin 2 is also expressed in the retrocerebral complex (at protein level).</text>
</comment>
<comment type="PTM">
    <text evidence="7">A pyrokinin potentially constituted by residues Asn-158 to Gly-170 has so far not been detected and might be completely absent in ants.</text>
</comment>
<comment type="mass spectrometry" mass="1071.63" method="MALDI" evidence="4">
    <molecule>Periviscerokinin 1</molecule>
    <text>Periviscerokinin 1.</text>
</comment>
<comment type="mass spectrometry" mass="1116.7" method="MALDI" evidence="4">
    <molecule>Periviscerokinin 2</molecule>
    <text>Periviscerokinin 2.</text>
</comment>
<feature type="signal peptide" evidence="2">
    <location>
        <begin position="1"/>
        <end position="22"/>
    </location>
</feature>
<feature type="propeptide" id="PRO_0000434198" evidence="4">
    <location>
        <begin position="23"/>
        <end position="29"/>
    </location>
</feature>
<feature type="peptide" id="PRO_0000434199" description="Periviscerokinin 1" evidence="4">
    <location>
        <begin position="32"/>
        <end position="41"/>
    </location>
</feature>
<feature type="propeptide" id="PRO_0000434200" evidence="4">
    <location>
        <begin position="44"/>
        <end position="54"/>
    </location>
</feature>
<feature type="peptide" id="PRO_0000434201" description="Periviscerokinin 2" evidence="4">
    <location>
        <begin position="56"/>
        <end position="65"/>
    </location>
</feature>
<feature type="propeptide" id="PRO_0000434202" evidence="4">
    <location>
        <begin position="68"/>
        <end position="181"/>
    </location>
</feature>
<feature type="region of interest" description="Disordered" evidence="3">
    <location>
        <begin position="159"/>
        <end position="181"/>
    </location>
</feature>
<feature type="compositionally biased region" description="Basic and acidic residues" evidence="3">
    <location>
        <begin position="169"/>
        <end position="181"/>
    </location>
</feature>
<feature type="modified residue" description="Isoleucine amide" evidence="4">
    <location>
        <position position="41"/>
    </location>
</feature>
<feature type="modified residue" description="Isoleucine amide" evidence="4">
    <location>
        <position position="65"/>
    </location>
</feature>
<name>CAPA_CAMFO</name>
<accession>E2AYH6</accession>